<feature type="chain" id="PRO_0000225801" description="UPF0145 protein BA_1001/GBAA_1001/BAS0936">
    <location>
        <begin position="1"/>
        <end position="103"/>
    </location>
</feature>
<sequence length="103" mass="11035">MIVTTTSGIQGKEIIEYIDIVNGEAIMGANIVRDLFASVRDVVGGRAGSYESKLKEARDIAMDEMKELAKQKGANAIVGVDVDYEVVRDGMLMVAVSGTAVRI</sequence>
<gene>
    <name type="ordered locus">BA_1001</name>
    <name type="ordered locus">GBAA_1001</name>
    <name type="ordered locus">BAS0936</name>
</gene>
<keyword id="KW-1185">Reference proteome</keyword>
<protein>
    <recommendedName>
        <fullName evidence="1">UPF0145 protein BA_1001/GBAA_1001/BAS0936</fullName>
    </recommendedName>
</protein>
<comment type="similarity">
    <text evidence="1">Belongs to the UPF0145 family.</text>
</comment>
<evidence type="ECO:0000255" key="1">
    <source>
        <dbReference type="HAMAP-Rule" id="MF_00338"/>
    </source>
</evidence>
<proteinExistence type="inferred from homology"/>
<name>Y1001_BACAN</name>
<organism>
    <name type="scientific">Bacillus anthracis</name>
    <dbReference type="NCBI Taxonomy" id="1392"/>
    <lineage>
        <taxon>Bacteria</taxon>
        <taxon>Bacillati</taxon>
        <taxon>Bacillota</taxon>
        <taxon>Bacilli</taxon>
        <taxon>Bacillales</taxon>
        <taxon>Bacillaceae</taxon>
        <taxon>Bacillus</taxon>
        <taxon>Bacillus cereus group</taxon>
    </lineage>
</organism>
<dbReference type="EMBL" id="AE016879">
    <property type="protein sequence ID" value="AAP24988.1"/>
    <property type="molecule type" value="Genomic_DNA"/>
</dbReference>
<dbReference type="EMBL" id="AE017334">
    <property type="protein sequence ID" value="AAT30104.1"/>
    <property type="molecule type" value="Genomic_DNA"/>
</dbReference>
<dbReference type="EMBL" id="AE017225">
    <property type="protein sequence ID" value="AAT53261.1"/>
    <property type="molecule type" value="Genomic_DNA"/>
</dbReference>
<dbReference type="RefSeq" id="NP_843502.1">
    <property type="nucleotide sequence ID" value="NC_003997.3"/>
</dbReference>
<dbReference type="RefSeq" id="WP_000637511.1">
    <property type="nucleotide sequence ID" value="NZ_WXXJ01000044.1"/>
</dbReference>
<dbReference type="RefSeq" id="YP_027210.1">
    <property type="nucleotide sequence ID" value="NC_005945.1"/>
</dbReference>
<dbReference type="SMR" id="Q81U83"/>
<dbReference type="STRING" id="261594.GBAA_1001"/>
<dbReference type="DNASU" id="1087707"/>
<dbReference type="KEGG" id="ban:BA_1001"/>
<dbReference type="KEGG" id="bar:GBAA_1001"/>
<dbReference type="KEGG" id="bat:BAS0936"/>
<dbReference type="PATRIC" id="fig|198094.11.peg.992"/>
<dbReference type="eggNOG" id="COG0393">
    <property type="taxonomic scope" value="Bacteria"/>
</dbReference>
<dbReference type="HOGENOM" id="CLU_117144_3_2_9"/>
<dbReference type="OMA" id="SGEAIMG"/>
<dbReference type="OrthoDB" id="9796448at2"/>
<dbReference type="Proteomes" id="UP000000427">
    <property type="component" value="Chromosome"/>
</dbReference>
<dbReference type="Proteomes" id="UP000000594">
    <property type="component" value="Chromosome"/>
</dbReference>
<dbReference type="Gene3D" id="3.30.110.70">
    <property type="entry name" value="Hypothetical protein apc22750. Chain B"/>
    <property type="match status" value="1"/>
</dbReference>
<dbReference type="HAMAP" id="MF_00338">
    <property type="entry name" value="UPF0145"/>
    <property type="match status" value="1"/>
</dbReference>
<dbReference type="InterPro" id="IPR035439">
    <property type="entry name" value="UPF0145_dom_sf"/>
</dbReference>
<dbReference type="InterPro" id="IPR002765">
    <property type="entry name" value="UPF0145_YbjQ-like"/>
</dbReference>
<dbReference type="NCBIfam" id="NF009495">
    <property type="entry name" value="PRK12855.1"/>
    <property type="match status" value="1"/>
</dbReference>
<dbReference type="NCBIfam" id="NF009496">
    <property type="entry name" value="PRK12856.1"/>
    <property type="match status" value="1"/>
</dbReference>
<dbReference type="PANTHER" id="PTHR34068">
    <property type="entry name" value="UPF0145 PROTEIN YBJQ"/>
    <property type="match status" value="1"/>
</dbReference>
<dbReference type="PANTHER" id="PTHR34068:SF1">
    <property type="entry name" value="UPF0145 PROTEIN YBJQ"/>
    <property type="match status" value="1"/>
</dbReference>
<dbReference type="Pfam" id="PF01906">
    <property type="entry name" value="YbjQ_1"/>
    <property type="match status" value="1"/>
</dbReference>
<dbReference type="SUPFAM" id="SSF117782">
    <property type="entry name" value="YbjQ-like"/>
    <property type="match status" value="1"/>
</dbReference>
<accession>Q81U83</accession>
<accession>Q6I2H0</accession>
<accession>Q6KW97</accession>
<reference key="1">
    <citation type="journal article" date="2003" name="Nature">
        <title>The genome sequence of Bacillus anthracis Ames and comparison to closely related bacteria.</title>
        <authorList>
            <person name="Read T.D."/>
            <person name="Peterson S.N."/>
            <person name="Tourasse N.J."/>
            <person name="Baillie L.W."/>
            <person name="Paulsen I.T."/>
            <person name="Nelson K.E."/>
            <person name="Tettelin H."/>
            <person name="Fouts D.E."/>
            <person name="Eisen J.A."/>
            <person name="Gill S.R."/>
            <person name="Holtzapple E.K."/>
            <person name="Okstad O.A."/>
            <person name="Helgason E."/>
            <person name="Rilstone J."/>
            <person name="Wu M."/>
            <person name="Kolonay J.F."/>
            <person name="Beanan M.J."/>
            <person name="Dodson R.J."/>
            <person name="Brinkac L.M."/>
            <person name="Gwinn M.L."/>
            <person name="DeBoy R.T."/>
            <person name="Madpu R."/>
            <person name="Daugherty S.C."/>
            <person name="Durkin A.S."/>
            <person name="Haft D.H."/>
            <person name="Nelson W.C."/>
            <person name="Peterson J.D."/>
            <person name="Pop M."/>
            <person name="Khouri H.M."/>
            <person name="Radune D."/>
            <person name="Benton J.L."/>
            <person name="Mahamoud Y."/>
            <person name="Jiang L."/>
            <person name="Hance I.R."/>
            <person name="Weidman J.F."/>
            <person name="Berry K.J."/>
            <person name="Plaut R.D."/>
            <person name="Wolf A.M."/>
            <person name="Watkins K.L."/>
            <person name="Nierman W.C."/>
            <person name="Hazen A."/>
            <person name="Cline R.T."/>
            <person name="Redmond C."/>
            <person name="Thwaite J.E."/>
            <person name="White O."/>
            <person name="Salzberg S.L."/>
            <person name="Thomason B."/>
            <person name="Friedlander A.M."/>
            <person name="Koehler T.M."/>
            <person name="Hanna P.C."/>
            <person name="Kolstoe A.-B."/>
            <person name="Fraser C.M."/>
        </authorList>
    </citation>
    <scope>NUCLEOTIDE SEQUENCE [LARGE SCALE GENOMIC DNA]</scope>
    <source>
        <strain>Ames / isolate Porton</strain>
    </source>
</reference>
<reference key="2">
    <citation type="journal article" date="2009" name="J. Bacteriol.">
        <title>The complete genome sequence of Bacillus anthracis Ames 'Ancestor'.</title>
        <authorList>
            <person name="Ravel J."/>
            <person name="Jiang L."/>
            <person name="Stanley S.T."/>
            <person name="Wilson M.R."/>
            <person name="Decker R.S."/>
            <person name="Read T.D."/>
            <person name="Worsham P."/>
            <person name="Keim P.S."/>
            <person name="Salzberg S.L."/>
            <person name="Fraser-Liggett C.M."/>
            <person name="Rasko D.A."/>
        </authorList>
    </citation>
    <scope>NUCLEOTIDE SEQUENCE [LARGE SCALE GENOMIC DNA]</scope>
    <source>
        <strain>Ames ancestor</strain>
    </source>
</reference>
<reference key="3">
    <citation type="submission" date="2004-01" db="EMBL/GenBank/DDBJ databases">
        <title>Complete genome sequence of Bacillus anthracis Sterne.</title>
        <authorList>
            <person name="Brettin T.S."/>
            <person name="Bruce D."/>
            <person name="Challacombe J.F."/>
            <person name="Gilna P."/>
            <person name="Han C."/>
            <person name="Hill K."/>
            <person name="Hitchcock P."/>
            <person name="Jackson P."/>
            <person name="Keim P."/>
            <person name="Longmire J."/>
            <person name="Lucas S."/>
            <person name="Okinaka R."/>
            <person name="Richardson P."/>
            <person name="Rubin E."/>
            <person name="Tice H."/>
        </authorList>
    </citation>
    <scope>NUCLEOTIDE SEQUENCE [LARGE SCALE GENOMIC DNA]</scope>
    <source>
        <strain>Sterne</strain>
    </source>
</reference>